<organism>
    <name type="scientific">Schizosaccharomyces pombe (strain 972 / ATCC 24843)</name>
    <name type="common">Fission yeast</name>
    <dbReference type="NCBI Taxonomy" id="284812"/>
    <lineage>
        <taxon>Eukaryota</taxon>
        <taxon>Fungi</taxon>
        <taxon>Dikarya</taxon>
        <taxon>Ascomycota</taxon>
        <taxon>Taphrinomycotina</taxon>
        <taxon>Schizosaccharomycetes</taxon>
        <taxon>Schizosaccharomycetales</taxon>
        <taxon>Schizosaccharomycetaceae</taxon>
        <taxon>Schizosaccharomyces</taxon>
    </lineage>
</organism>
<dbReference type="EC" id="2.3.2.27"/>
<dbReference type="EMBL" id="CU329671">
    <property type="protein sequence ID" value="CAB09120.1"/>
    <property type="molecule type" value="Genomic_DNA"/>
</dbReference>
<dbReference type="EMBL" id="AB028016">
    <property type="protein sequence ID" value="BAA87320.1"/>
    <property type="molecule type" value="Genomic_DNA"/>
</dbReference>
<dbReference type="PIR" id="T40371">
    <property type="entry name" value="T40371"/>
</dbReference>
<dbReference type="RefSeq" id="NP_595523.1">
    <property type="nucleotide sequence ID" value="NM_001021432.2"/>
</dbReference>
<dbReference type="SMR" id="P87176"/>
<dbReference type="BioGRID" id="277144">
    <property type="interactions" value="37"/>
</dbReference>
<dbReference type="FunCoup" id="P87176">
    <property type="interactions" value="25"/>
</dbReference>
<dbReference type="IntAct" id="P87176">
    <property type="interactions" value="3"/>
</dbReference>
<dbReference type="MINT" id="P87176"/>
<dbReference type="STRING" id="284812.P87176"/>
<dbReference type="iPTMnet" id="P87176"/>
<dbReference type="PaxDb" id="4896-SPBC3D6.11c.1"/>
<dbReference type="EnsemblFungi" id="SPBC3D6.11c.1">
    <property type="protein sequence ID" value="SPBC3D6.11c.1:pep"/>
    <property type="gene ID" value="SPBC3D6.11c"/>
</dbReference>
<dbReference type="GeneID" id="2540618"/>
<dbReference type="KEGG" id="spo:2540618"/>
<dbReference type="PomBase" id="SPBC3D6.11c">
    <property type="gene designation" value="slx8"/>
</dbReference>
<dbReference type="VEuPathDB" id="FungiDB:SPBC3D6.11c"/>
<dbReference type="eggNOG" id="KOG0317">
    <property type="taxonomic scope" value="Eukaryota"/>
</dbReference>
<dbReference type="HOGENOM" id="CLU_1094820_0_0_1"/>
<dbReference type="InParanoid" id="P87176"/>
<dbReference type="OMA" id="INFQNDA"/>
<dbReference type="PhylomeDB" id="P87176"/>
<dbReference type="UniPathway" id="UPA00143"/>
<dbReference type="PRO" id="PR:P87176"/>
<dbReference type="Proteomes" id="UP000002485">
    <property type="component" value="Chromosome II"/>
</dbReference>
<dbReference type="GO" id="GO:0000785">
    <property type="term" value="C:chromatin"/>
    <property type="evidence" value="ECO:0000314"/>
    <property type="project" value="PomBase"/>
</dbReference>
<dbReference type="GO" id="GO:0000775">
    <property type="term" value="C:chromosome, centromeric region"/>
    <property type="evidence" value="ECO:0000269"/>
    <property type="project" value="PomBase"/>
</dbReference>
<dbReference type="GO" id="GO:0031934">
    <property type="term" value="C:mating-type region heterochromatin"/>
    <property type="evidence" value="ECO:0000269"/>
    <property type="project" value="PomBase"/>
</dbReference>
<dbReference type="GO" id="GO:0044732">
    <property type="term" value="C:mitotic spindle pole body"/>
    <property type="evidence" value="ECO:0000269"/>
    <property type="project" value="PomBase"/>
</dbReference>
<dbReference type="GO" id="GO:0034399">
    <property type="term" value="C:nuclear periphery"/>
    <property type="evidence" value="ECO:0000269"/>
    <property type="project" value="PomBase"/>
</dbReference>
<dbReference type="GO" id="GO:0005634">
    <property type="term" value="C:nucleus"/>
    <property type="evidence" value="ECO:0000314"/>
    <property type="project" value="PomBase"/>
</dbReference>
<dbReference type="GO" id="GO:0033768">
    <property type="term" value="C:SUMO-targeted ubiquitin ligase complex"/>
    <property type="evidence" value="ECO:0000353"/>
    <property type="project" value="PomBase"/>
</dbReference>
<dbReference type="GO" id="GO:0032183">
    <property type="term" value="F:SUMO binding"/>
    <property type="evidence" value="ECO:0000318"/>
    <property type="project" value="GO_Central"/>
</dbReference>
<dbReference type="GO" id="GO:0061630">
    <property type="term" value="F:ubiquitin protein ligase activity"/>
    <property type="evidence" value="ECO:0000314"/>
    <property type="project" value="PomBase"/>
</dbReference>
<dbReference type="GO" id="GO:0008270">
    <property type="term" value="F:zinc ion binding"/>
    <property type="evidence" value="ECO:0000255"/>
    <property type="project" value="PomBase"/>
</dbReference>
<dbReference type="GO" id="GO:0072766">
    <property type="term" value="P:centromere clustering at the mitotic interphase nuclear envelope"/>
    <property type="evidence" value="ECO:0000269"/>
    <property type="project" value="PomBase"/>
</dbReference>
<dbReference type="GO" id="GO:0006310">
    <property type="term" value="P:DNA recombination"/>
    <property type="evidence" value="ECO:0000316"/>
    <property type="project" value="PomBase"/>
</dbReference>
<dbReference type="GO" id="GO:0016567">
    <property type="term" value="P:protein ubiquitination"/>
    <property type="evidence" value="ECO:0007669"/>
    <property type="project" value="UniProtKB-UniPathway"/>
</dbReference>
<dbReference type="GO" id="GO:0120290">
    <property type="term" value="P:stalled replication fork localization to nuclear periphery"/>
    <property type="evidence" value="ECO:0000315"/>
    <property type="project" value="PomBase"/>
</dbReference>
<dbReference type="GO" id="GO:0006511">
    <property type="term" value="P:ubiquitin-dependent protein catabolic process"/>
    <property type="evidence" value="ECO:0000314"/>
    <property type="project" value="PomBase"/>
</dbReference>
<dbReference type="Gene3D" id="3.30.40.10">
    <property type="entry name" value="Zinc/RING finger domain, C3HC4 (zinc finger)"/>
    <property type="match status" value="1"/>
</dbReference>
<dbReference type="InterPro" id="IPR049627">
    <property type="entry name" value="SLX8"/>
</dbReference>
<dbReference type="InterPro" id="IPR001841">
    <property type="entry name" value="Znf_RING"/>
</dbReference>
<dbReference type="InterPro" id="IPR013083">
    <property type="entry name" value="Znf_RING/FYVE/PHD"/>
</dbReference>
<dbReference type="InterPro" id="IPR017907">
    <property type="entry name" value="Znf_RING_CS"/>
</dbReference>
<dbReference type="PANTHER" id="PTHR47094">
    <property type="entry name" value="ELFLESS, ISOFORM B"/>
    <property type="match status" value="1"/>
</dbReference>
<dbReference type="PANTHER" id="PTHR47094:SF1">
    <property type="entry name" value="RING-TYPE E3 UBIQUITIN TRANSFERASE"/>
    <property type="match status" value="1"/>
</dbReference>
<dbReference type="Pfam" id="PF13920">
    <property type="entry name" value="zf-C3HC4_3"/>
    <property type="match status" value="1"/>
</dbReference>
<dbReference type="SMART" id="SM00184">
    <property type="entry name" value="RING"/>
    <property type="match status" value="1"/>
</dbReference>
<dbReference type="SUPFAM" id="SSF57850">
    <property type="entry name" value="RING/U-box"/>
    <property type="match status" value="1"/>
</dbReference>
<dbReference type="PROSITE" id="PS00518">
    <property type="entry name" value="ZF_RING_1"/>
    <property type="match status" value="1"/>
</dbReference>
<dbReference type="PROSITE" id="PS50089">
    <property type="entry name" value="ZF_RING_2"/>
    <property type="match status" value="1"/>
</dbReference>
<evidence type="ECO:0000250" key="1"/>
<evidence type="ECO:0000255" key="2">
    <source>
        <dbReference type="PROSITE-ProRule" id="PRU00175"/>
    </source>
</evidence>
<evidence type="ECO:0000256" key="3">
    <source>
        <dbReference type="SAM" id="MobiDB-lite"/>
    </source>
</evidence>
<evidence type="ECO:0000269" key="4">
    <source>
    </source>
</evidence>
<evidence type="ECO:0000269" key="5">
    <source>
    </source>
</evidence>
<evidence type="ECO:0000269" key="6">
    <source>
    </source>
</evidence>
<evidence type="ECO:0000305" key="7"/>
<keyword id="KW-0479">Metal-binding</keyword>
<keyword id="KW-0539">Nucleus</keyword>
<keyword id="KW-1185">Reference proteome</keyword>
<keyword id="KW-0808">Transferase</keyword>
<keyword id="KW-0833">Ubl conjugation pathway</keyword>
<keyword id="KW-0862">Zinc</keyword>
<keyword id="KW-0863">Zinc-finger</keyword>
<sequence length="269" mass="29656">MPPAHKRDTNVRNLSAPYNIPSQSARVAAGNAAINRRRSSPVENSPGNGFPVSEDATDYPSGTTSENESLPLNRAPRSLREVASELAQEETLPVETSDLNIDVESEVFDLEDINFQNDADDINQRFTYNNHPASVENSLTNVNSIHAQPTTISDMIDLTDETSYDPRKQKFEQGKNPSTTNAEIEKEEPSKKQVVPSSQRLADYKCVICLDSPENLSCTPCGHIFCNFCILSALGTTAATQKCPVCRRKVHPNKVICLEMMLGSQKKKS</sequence>
<accession>P87176</accession>
<accession>Q9US65</accession>
<feature type="chain" id="PRO_0000056331" description="E3 ubiquitin-protein ligase complex slx8-rfp subunit slx8">
    <location>
        <begin position="1"/>
        <end position="269"/>
    </location>
</feature>
<feature type="zinc finger region" description="RING-type" evidence="2">
    <location>
        <begin position="206"/>
        <end position="247"/>
    </location>
</feature>
<feature type="region of interest" description="Disordered" evidence="3">
    <location>
        <begin position="1"/>
        <end position="75"/>
    </location>
</feature>
<feature type="region of interest" description="Disordered" evidence="3">
    <location>
        <begin position="166"/>
        <end position="196"/>
    </location>
</feature>
<feature type="compositionally biased region" description="Basic and acidic residues" evidence="3">
    <location>
        <begin position="1"/>
        <end position="10"/>
    </location>
</feature>
<feature type="compositionally biased region" description="Polar residues" evidence="3">
    <location>
        <begin position="60"/>
        <end position="70"/>
    </location>
</feature>
<proteinExistence type="evidence at protein level"/>
<name>SLX8_SCHPO</name>
<comment type="function">
    <text evidence="1 5 6">Mediates ubiquitination and subsequent desumoylation/degradation of sumoylated proteins and proteins containing SUMO-like domains. Acts as a critical suppressor of gross chromosomal rearrangements (GCRs) during normal cell cycle progression. Involved in stabilizing, restarting or resolving transiently stalled replication forks. Prevents accumulation of DNA damage during cell cycle progression (By similarity).</text>
</comment>
<comment type="catalytic activity">
    <reaction>
        <text>S-ubiquitinyl-[E2 ubiquitin-conjugating enzyme]-L-cysteine + [acceptor protein]-L-lysine = [E2 ubiquitin-conjugating enzyme]-L-cysteine + N(6)-ubiquitinyl-[acceptor protein]-L-lysine.</text>
        <dbReference type="EC" id="2.3.2.27"/>
    </reaction>
</comment>
<comment type="pathway">
    <text>Protein modification; protein ubiquitination.</text>
</comment>
<comment type="subunit">
    <text evidence="6">Part of an E3 ubiquitin complex including rfp1, rfp2 and slx8. Interacts with rfp1 and rfp2.</text>
</comment>
<comment type="interaction">
    <interactant intactId="EBI-7588105">
        <id>P87176</id>
    </interactant>
    <interactant intactId="EBI-3647269">
        <id>O13826</id>
        <label>rfp1</label>
    </interactant>
    <organismsDiffer>false</organismsDiffer>
    <experiments>5</experiments>
</comment>
<comment type="interaction">
    <interactant intactId="EBI-7588105">
        <id>P87176</id>
    </interactant>
    <interactant intactId="EBI-7587772">
        <id>Q9UT72</id>
        <label>rfp2</label>
    </interactant>
    <organismsDiffer>false</organismsDiffer>
    <experiments>3</experiments>
</comment>
<comment type="subcellular location">
    <subcellularLocation>
        <location evidence="4 6">Nucleus</location>
    </subcellularLocation>
</comment>
<gene>
    <name type="primary">slx8</name>
    <name type="ORF">SPBC3D6.11c</name>
</gene>
<reference key="1">
    <citation type="journal article" date="2002" name="Nature">
        <title>The genome sequence of Schizosaccharomyces pombe.</title>
        <authorList>
            <person name="Wood V."/>
            <person name="Gwilliam R."/>
            <person name="Rajandream M.A."/>
            <person name="Lyne M.H."/>
            <person name="Lyne R."/>
            <person name="Stewart A."/>
            <person name="Sgouros J.G."/>
            <person name="Peat N."/>
            <person name="Hayles J."/>
            <person name="Baker S.G."/>
            <person name="Basham D."/>
            <person name="Bowman S."/>
            <person name="Brooks K."/>
            <person name="Brown D."/>
            <person name="Brown S."/>
            <person name="Chillingworth T."/>
            <person name="Churcher C.M."/>
            <person name="Collins M."/>
            <person name="Connor R."/>
            <person name="Cronin A."/>
            <person name="Davis P."/>
            <person name="Feltwell T."/>
            <person name="Fraser A."/>
            <person name="Gentles S."/>
            <person name="Goble A."/>
            <person name="Hamlin N."/>
            <person name="Harris D.E."/>
            <person name="Hidalgo J."/>
            <person name="Hodgson G."/>
            <person name="Holroyd S."/>
            <person name="Hornsby T."/>
            <person name="Howarth S."/>
            <person name="Huckle E.J."/>
            <person name="Hunt S."/>
            <person name="Jagels K."/>
            <person name="James K.D."/>
            <person name="Jones L."/>
            <person name="Jones M."/>
            <person name="Leather S."/>
            <person name="McDonald S."/>
            <person name="McLean J."/>
            <person name="Mooney P."/>
            <person name="Moule S."/>
            <person name="Mungall K.L."/>
            <person name="Murphy L.D."/>
            <person name="Niblett D."/>
            <person name="Odell C."/>
            <person name="Oliver K."/>
            <person name="O'Neil S."/>
            <person name="Pearson D."/>
            <person name="Quail M.A."/>
            <person name="Rabbinowitsch E."/>
            <person name="Rutherford K.M."/>
            <person name="Rutter S."/>
            <person name="Saunders D."/>
            <person name="Seeger K."/>
            <person name="Sharp S."/>
            <person name="Skelton J."/>
            <person name="Simmonds M.N."/>
            <person name="Squares R."/>
            <person name="Squares S."/>
            <person name="Stevens K."/>
            <person name="Taylor K."/>
            <person name="Taylor R.G."/>
            <person name="Tivey A."/>
            <person name="Walsh S.V."/>
            <person name="Warren T."/>
            <person name="Whitehead S."/>
            <person name="Woodward J.R."/>
            <person name="Volckaert G."/>
            <person name="Aert R."/>
            <person name="Robben J."/>
            <person name="Grymonprez B."/>
            <person name="Weltjens I."/>
            <person name="Vanstreels E."/>
            <person name="Rieger M."/>
            <person name="Schaefer M."/>
            <person name="Mueller-Auer S."/>
            <person name="Gabel C."/>
            <person name="Fuchs M."/>
            <person name="Duesterhoeft A."/>
            <person name="Fritzc C."/>
            <person name="Holzer E."/>
            <person name="Moestl D."/>
            <person name="Hilbert H."/>
            <person name="Borzym K."/>
            <person name="Langer I."/>
            <person name="Beck A."/>
            <person name="Lehrach H."/>
            <person name="Reinhardt R."/>
            <person name="Pohl T.M."/>
            <person name="Eger P."/>
            <person name="Zimmermann W."/>
            <person name="Wedler H."/>
            <person name="Wambutt R."/>
            <person name="Purnelle B."/>
            <person name="Goffeau A."/>
            <person name="Cadieu E."/>
            <person name="Dreano S."/>
            <person name="Gloux S."/>
            <person name="Lelaure V."/>
            <person name="Mottier S."/>
            <person name="Galibert F."/>
            <person name="Aves S.J."/>
            <person name="Xiang Z."/>
            <person name="Hunt C."/>
            <person name="Moore K."/>
            <person name="Hurst S.M."/>
            <person name="Lucas M."/>
            <person name="Rochet M."/>
            <person name="Gaillardin C."/>
            <person name="Tallada V.A."/>
            <person name="Garzon A."/>
            <person name="Thode G."/>
            <person name="Daga R.R."/>
            <person name="Cruzado L."/>
            <person name="Jimenez J."/>
            <person name="Sanchez M."/>
            <person name="del Rey F."/>
            <person name="Benito J."/>
            <person name="Dominguez A."/>
            <person name="Revuelta J.L."/>
            <person name="Moreno S."/>
            <person name="Armstrong J."/>
            <person name="Forsburg S.L."/>
            <person name="Cerutti L."/>
            <person name="Lowe T."/>
            <person name="McCombie W.R."/>
            <person name="Paulsen I."/>
            <person name="Potashkin J."/>
            <person name="Shpakovski G.V."/>
            <person name="Ussery D."/>
            <person name="Barrell B.G."/>
            <person name="Nurse P."/>
        </authorList>
    </citation>
    <scope>NUCLEOTIDE SEQUENCE [LARGE SCALE GENOMIC DNA]</scope>
    <source>
        <strain>972 / ATCC 24843</strain>
    </source>
</reference>
<reference key="2">
    <citation type="journal article" date="2000" name="Genes Cells">
        <title>Large-scale screening of intracellular protein localization in living fission yeast cells by the use of a GFP-fusion genomic DNA library.</title>
        <authorList>
            <person name="Ding D.-Q."/>
            <person name="Tomita Y."/>
            <person name="Yamamoto A."/>
            <person name="Chikashige Y."/>
            <person name="Haraguchi T."/>
            <person name="Hiraoka Y."/>
        </authorList>
    </citation>
    <scope>NUCLEOTIDE SEQUENCE [LARGE SCALE GENOMIC DNA] OF 1-165</scope>
    <scope>SUBCELLULAR LOCATION</scope>
    <source>
        <strain>ATCC 38364 / 968</strain>
    </source>
</reference>
<reference key="3">
    <citation type="journal article" date="2007" name="EMBO J.">
        <title>SUMO-targeted ubiquitin ligases in genome stability.</title>
        <authorList>
            <person name="Prudden J."/>
            <person name="Pebernard S."/>
            <person name="Raffa G."/>
            <person name="Slavin D.A."/>
            <person name="Perry J.J.P."/>
            <person name="Tainer J.A."/>
            <person name="McGowan C.H."/>
            <person name="Boddy M.N."/>
        </authorList>
    </citation>
    <scope>FUNCTION IN DEGRADATION OF SUMOYLATED PROTEINS</scope>
    <scope>IDENTIFICATION IN A E3 UBIQUITIN-PROTEIN LIGASE COMPLEX WITH RFP1 AND RFP2</scope>
    <scope>INTERACTION WITH RFP1 AND RFP2</scope>
    <scope>SUBCELLULAR LOCATION</scope>
</reference>
<reference key="4">
    <citation type="journal article" date="2007" name="EMBO J.">
        <title>Conserved function of RNF4 family proteins in eukaryotes: targeting a ubiquitin ligase to SUMOylated proteins.</title>
        <authorList>
            <person name="Sun H."/>
            <person name="Leverson J.D."/>
            <person name="Hunter T."/>
        </authorList>
    </citation>
    <scope>FUNCTION IN DEGRADATION OF SUMOYLATED PROTEINS</scope>
</reference>
<protein>
    <recommendedName>
        <fullName>E3 ubiquitin-protein ligase complex slx8-rfp subunit slx8</fullName>
        <ecNumber>2.3.2.27</ecNumber>
    </recommendedName>
    <alternativeName>
        <fullName>RING finger protein slx8</fullName>
    </alternativeName>
    <alternativeName>
        <fullName>RING-dependent E3 ubiquitin-protein ligase slx8</fullName>
    </alternativeName>
    <alternativeName>
        <fullName evidence="7">RING-type E3 ubiquitin transferase slx8</fullName>
    </alternativeName>
    <alternativeName>
        <fullName>Synthetic lethal of unknown function protein 8</fullName>
    </alternativeName>
</protein>